<reference evidence="5" key="1">
    <citation type="journal article" date="2020" name="J. Proteomics">
        <title>Mo-HLPs: New flocculating agents identified from Moringa oleifera seeds belong to the hevein-like peptide family.</title>
        <authorList>
            <person name="Sousa A.M.P."/>
            <person name="Salles H.O."/>
            <person name="Oliveira H.D."/>
            <person name="Souza B.B.P."/>
            <person name="Cardozo Filho J.L."/>
            <person name="Sifuentes D.N."/>
            <person name="Prates M.V."/>
            <person name="Bloch Junior C."/>
            <person name="Bemquerer M.P."/>
            <person name="Egito A.S.D."/>
        </authorList>
    </citation>
    <scope>PROTEIN SEQUENCE</scope>
    <scope>IDENTIFICATION BY MASS SPECTROMETRY</scope>
    <scope>TISSUE SPECIFICITY</scope>
    <scope>BIOTECHNOLOGY</scope>
    <source>
        <tissue evidence="4">Seed</tissue>
    </source>
</reference>
<keyword id="KW-0929">Antimicrobial</keyword>
<keyword id="KW-0147">Chitin-binding</keyword>
<keyword id="KW-0903">Direct protein sequencing</keyword>
<keyword id="KW-1015">Disulfide bond</keyword>
<keyword id="KW-0295">Fungicide</keyword>
<comment type="function">
    <text evidence="1">Chitin-binding protein which functions in defense against chitin-containing fungal pathogens.</text>
</comment>
<comment type="tissue specificity">
    <text evidence="3">Seeds (at protein level).</text>
</comment>
<comment type="mass spectrometry"/>
<comment type="biotechnology">
    <text evidence="3">Has potential use as a flocculating agent in water treatment processes.</text>
</comment>
<dbReference type="SMR" id="C0HLV3"/>
<dbReference type="GO" id="GO:0008061">
    <property type="term" value="F:chitin binding"/>
    <property type="evidence" value="ECO:0007669"/>
    <property type="project" value="UniProtKB-KW"/>
</dbReference>
<dbReference type="GO" id="GO:0050832">
    <property type="term" value="P:defense response to fungus"/>
    <property type="evidence" value="ECO:0007669"/>
    <property type="project" value="UniProtKB-KW"/>
</dbReference>
<dbReference type="GO" id="GO:0031640">
    <property type="term" value="P:killing of cells of another organism"/>
    <property type="evidence" value="ECO:0007669"/>
    <property type="project" value="UniProtKB-KW"/>
</dbReference>
<dbReference type="Gene3D" id="3.30.60.10">
    <property type="entry name" value="Endochitinase-like"/>
    <property type="match status" value="1"/>
</dbReference>
<dbReference type="InterPro" id="IPR001002">
    <property type="entry name" value="Chitin-bd_1"/>
</dbReference>
<dbReference type="InterPro" id="IPR036861">
    <property type="entry name" value="Endochitinase-like_sf"/>
</dbReference>
<dbReference type="Pfam" id="PF00187">
    <property type="entry name" value="Chitin_bind_1"/>
    <property type="match status" value="1"/>
</dbReference>
<dbReference type="SUPFAM" id="SSF57016">
    <property type="entry name" value="Plant lectins/antimicrobial peptides"/>
    <property type="match status" value="1"/>
</dbReference>
<dbReference type="PROSITE" id="PS50941">
    <property type="entry name" value="CHIT_BIND_I_2"/>
    <property type="match status" value="1"/>
</dbReference>
<accession>C0HLV3</accession>
<proteinExistence type="evidence at protein level"/>
<feature type="peptide" id="PRO_0000452811" description="Morintide mO4" evidence="3">
    <location>
        <begin position="1"/>
        <end position="26"/>
    </location>
</feature>
<feature type="domain" description="Chitin-binding type-1" evidence="2">
    <location>
        <begin position="1"/>
        <end position="26"/>
    </location>
</feature>
<feature type="disulfide bond" evidence="2">
    <location>
        <begin position="4"/>
        <end position="18"/>
    </location>
</feature>
<feature type="unsure residue" description="L or I" evidence="3">
    <location>
        <position position="3"/>
    </location>
</feature>
<feature type="unsure residue" description="Q or K" evidence="3">
    <location>
        <position position="7"/>
    </location>
</feature>
<feature type="unsure residue" description="Q or K" evidence="3">
    <location>
        <position position="25"/>
    </location>
</feature>
<feature type="non-terminal residue" evidence="4">
    <location>
        <position position="1"/>
    </location>
</feature>
<feature type="non-terminal residue" evidence="4">
    <location>
        <position position="26"/>
    </location>
</feature>
<organism evidence="4">
    <name type="scientific">Moringa oleifera</name>
    <name type="common">Horseradish tree</name>
    <name type="synonym">Moringa pterygosperma</name>
    <dbReference type="NCBI Taxonomy" id="3735"/>
    <lineage>
        <taxon>Eukaryota</taxon>
        <taxon>Viridiplantae</taxon>
        <taxon>Streptophyta</taxon>
        <taxon>Embryophyta</taxon>
        <taxon>Tracheophyta</taxon>
        <taxon>Spermatophyta</taxon>
        <taxon>Magnoliopsida</taxon>
        <taxon>eudicotyledons</taxon>
        <taxon>Gunneridae</taxon>
        <taxon>Pentapetalae</taxon>
        <taxon>rosids</taxon>
        <taxon>malvids</taxon>
        <taxon>Brassicales</taxon>
        <taxon>Moringaceae</taxon>
        <taxon>Moringa</taxon>
    </lineage>
</organism>
<sequence>NRLCCSQYGFCGTTSEYCSRVSGCQS</sequence>
<evidence type="ECO:0000250" key="1">
    <source>
        <dbReference type="UniProtKB" id="A0A1S6EK91"/>
    </source>
</evidence>
<evidence type="ECO:0000255" key="2">
    <source>
        <dbReference type="PROSITE-ProRule" id="PRU00261"/>
    </source>
</evidence>
<evidence type="ECO:0000269" key="3">
    <source>
    </source>
</evidence>
<evidence type="ECO:0000303" key="4">
    <source>
    </source>
</evidence>
<evidence type="ECO:0000305" key="5"/>
<name>MO4_MOROL</name>
<protein>
    <recommendedName>
        <fullName evidence="5">Morintide mO4</fullName>
    </recommendedName>
    <alternativeName>
        <fullName evidence="4">Morintide hevein-like peptide 4</fullName>
        <shortName evidence="4">Mo-HLP4</shortName>
    </alternativeName>
</protein>